<accession>O30058</accession>
<name>Y179_ARCFU</name>
<sequence>MAGRVQEIVCRGGWMRAVVVLRDEIEPSFDAEEIHLLVLENGTGGRAISEKGEMRAMARDKIRAIRRAEKLFERFEEFYNVSGLSIAFDRFEDELIHAVESLGAEVVYFFTSMPLPERLLSENVTLVFPRGGLSFNKALYVHSSSTPNTAWLERAKELFILAIVQPTMPPEASSRKFREEFERMERETEELSSHLKAERAVIRGNIVEDTLRYSEKHGADTIFLNRGLGKENIEKIVERAKASVVVV</sequence>
<protein>
    <recommendedName>
        <fullName>Uncharacterized protein AF_0179</fullName>
    </recommendedName>
</protein>
<organism>
    <name type="scientific">Archaeoglobus fulgidus (strain ATCC 49558 / DSM 4304 / JCM 9628 / NBRC 100126 / VC-16)</name>
    <dbReference type="NCBI Taxonomy" id="224325"/>
    <lineage>
        <taxon>Archaea</taxon>
        <taxon>Methanobacteriati</taxon>
        <taxon>Methanobacteriota</taxon>
        <taxon>Archaeoglobi</taxon>
        <taxon>Archaeoglobales</taxon>
        <taxon>Archaeoglobaceae</taxon>
        <taxon>Archaeoglobus</taxon>
    </lineage>
</organism>
<feature type="chain" id="PRO_0000127846" description="Uncharacterized protein AF_0179">
    <location>
        <begin position="1"/>
        <end position="247"/>
    </location>
</feature>
<dbReference type="EMBL" id="AE000782">
    <property type="protein sequence ID" value="AAB91051.1"/>
    <property type="molecule type" value="Genomic_DNA"/>
</dbReference>
<dbReference type="PIR" id="C69272">
    <property type="entry name" value="C69272"/>
</dbReference>
<dbReference type="PaxDb" id="224325-AF_0179"/>
<dbReference type="EnsemblBacteria" id="AAB91051">
    <property type="protein sequence ID" value="AAB91051"/>
    <property type="gene ID" value="AF_0179"/>
</dbReference>
<dbReference type="KEGG" id="afu:AF_0179"/>
<dbReference type="HOGENOM" id="CLU_1122573_0_0_2"/>
<dbReference type="Proteomes" id="UP000002199">
    <property type="component" value="Chromosome"/>
</dbReference>
<keyword id="KW-1185">Reference proteome</keyword>
<proteinExistence type="predicted"/>
<gene>
    <name type="ordered locus">AF_0179</name>
</gene>
<reference key="1">
    <citation type="journal article" date="1997" name="Nature">
        <title>The complete genome sequence of the hyperthermophilic, sulphate-reducing archaeon Archaeoglobus fulgidus.</title>
        <authorList>
            <person name="Klenk H.-P."/>
            <person name="Clayton R.A."/>
            <person name="Tomb J.-F."/>
            <person name="White O."/>
            <person name="Nelson K.E."/>
            <person name="Ketchum K.A."/>
            <person name="Dodson R.J."/>
            <person name="Gwinn M.L."/>
            <person name="Hickey E.K."/>
            <person name="Peterson J.D."/>
            <person name="Richardson D.L."/>
            <person name="Kerlavage A.R."/>
            <person name="Graham D.E."/>
            <person name="Kyrpides N.C."/>
            <person name="Fleischmann R.D."/>
            <person name="Quackenbush J."/>
            <person name="Lee N.H."/>
            <person name="Sutton G.G."/>
            <person name="Gill S.R."/>
            <person name="Kirkness E.F."/>
            <person name="Dougherty B.A."/>
            <person name="McKenney K."/>
            <person name="Adams M.D."/>
            <person name="Loftus B.J."/>
            <person name="Peterson S.N."/>
            <person name="Reich C.I."/>
            <person name="McNeil L.K."/>
            <person name="Badger J.H."/>
            <person name="Glodek A."/>
            <person name="Zhou L."/>
            <person name="Overbeek R."/>
            <person name="Gocayne J.D."/>
            <person name="Weidman J.F."/>
            <person name="McDonald L.A."/>
            <person name="Utterback T.R."/>
            <person name="Cotton M.D."/>
            <person name="Spriggs T."/>
            <person name="Artiach P."/>
            <person name="Kaine B.P."/>
            <person name="Sykes S.M."/>
            <person name="Sadow P.W."/>
            <person name="D'Andrea K.P."/>
            <person name="Bowman C."/>
            <person name="Fujii C."/>
            <person name="Garland S.A."/>
            <person name="Mason T.M."/>
            <person name="Olsen G.J."/>
            <person name="Fraser C.M."/>
            <person name="Smith H.O."/>
            <person name="Woese C.R."/>
            <person name="Venter J.C."/>
        </authorList>
    </citation>
    <scope>NUCLEOTIDE SEQUENCE [LARGE SCALE GENOMIC DNA]</scope>
    <source>
        <strain>ATCC 49558 / DSM 4304 / JCM 9628 / NBRC 100126 / VC-16</strain>
    </source>
</reference>